<keyword id="KW-0227">DNA damage</keyword>
<keyword id="KW-0233">DNA recombination</keyword>
<keyword id="KW-0234">DNA repair</keyword>
<keyword id="KW-0479">Metal-binding</keyword>
<keyword id="KW-0862">Zinc</keyword>
<keyword id="KW-0863">Zinc-finger</keyword>
<feature type="chain" id="PRO_1000089714" description="Recombination protein RecR">
    <location>
        <begin position="1"/>
        <end position="205"/>
    </location>
</feature>
<feature type="domain" description="Toprim" evidence="1">
    <location>
        <begin position="83"/>
        <end position="182"/>
    </location>
</feature>
<feature type="zinc finger region" description="C4-type" evidence="1">
    <location>
        <begin position="58"/>
        <end position="75"/>
    </location>
</feature>
<protein>
    <recommendedName>
        <fullName evidence="1">Recombination protein RecR</fullName>
    </recommendedName>
</protein>
<evidence type="ECO:0000255" key="1">
    <source>
        <dbReference type="HAMAP-Rule" id="MF_00017"/>
    </source>
</evidence>
<comment type="function">
    <text evidence="1">May play a role in DNA repair. It seems to be involved in an RecBC-independent recombinational process of DNA repair. It may act with RecF and RecO.</text>
</comment>
<comment type="similarity">
    <text evidence="1">Belongs to the RecR family.</text>
</comment>
<proteinExistence type="inferred from homology"/>
<dbReference type="EMBL" id="CP001097">
    <property type="protein sequence ID" value="ACD89955.1"/>
    <property type="molecule type" value="Genomic_DNA"/>
</dbReference>
<dbReference type="RefSeq" id="WP_012465834.1">
    <property type="nucleotide sequence ID" value="NC_010803.1"/>
</dbReference>
<dbReference type="SMR" id="B3EIC5"/>
<dbReference type="STRING" id="290315.Clim_0876"/>
<dbReference type="KEGG" id="cli:Clim_0876"/>
<dbReference type="eggNOG" id="COG0353">
    <property type="taxonomic scope" value="Bacteria"/>
</dbReference>
<dbReference type="HOGENOM" id="CLU_060739_1_0_10"/>
<dbReference type="OrthoDB" id="9802672at2"/>
<dbReference type="Proteomes" id="UP000008841">
    <property type="component" value="Chromosome"/>
</dbReference>
<dbReference type="GO" id="GO:0003677">
    <property type="term" value="F:DNA binding"/>
    <property type="evidence" value="ECO:0007669"/>
    <property type="project" value="UniProtKB-UniRule"/>
</dbReference>
<dbReference type="GO" id="GO:0008270">
    <property type="term" value="F:zinc ion binding"/>
    <property type="evidence" value="ECO:0007669"/>
    <property type="project" value="UniProtKB-KW"/>
</dbReference>
<dbReference type="GO" id="GO:0006310">
    <property type="term" value="P:DNA recombination"/>
    <property type="evidence" value="ECO:0007669"/>
    <property type="project" value="UniProtKB-UniRule"/>
</dbReference>
<dbReference type="GO" id="GO:0006281">
    <property type="term" value="P:DNA repair"/>
    <property type="evidence" value="ECO:0007669"/>
    <property type="project" value="UniProtKB-UniRule"/>
</dbReference>
<dbReference type="CDD" id="cd01025">
    <property type="entry name" value="TOPRIM_recR"/>
    <property type="match status" value="1"/>
</dbReference>
<dbReference type="Gene3D" id="3.30.60.80">
    <property type="match status" value="1"/>
</dbReference>
<dbReference type="Gene3D" id="3.40.1360.10">
    <property type="match status" value="1"/>
</dbReference>
<dbReference type="Gene3D" id="6.10.250.240">
    <property type="match status" value="1"/>
</dbReference>
<dbReference type="Gene3D" id="1.10.8.420">
    <property type="entry name" value="RecR Domain 1"/>
    <property type="match status" value="1"/>
</dbReference>
<dbReference type="HAMAP" id="MF_00017">
    <property type="entry name" value="RecR"/>
    <property type="match status" value="1"/>
</dbReference>
<dbReference type="InterPro" id="IPR000093">
    <property type="entry name" value="DNA_Rcmb_RecR"/>
</dbReference>
<dbReference type="InterPro" id="IPR023627">
    <property type="entry name" value="Rcmb_RecR"/>
</dbReference>
<dbReference type="InterPro" id="IPR006171">
    <property type="entry name" value="TOPRIM_dom"/>
</dbReference>
<dbReference type="InterPro" id="IPR034137">
    <property type="entry name" value="TOPRIM_RecR"/>
</dbReference>
<dbReference type="NCBIfam" id="TIGR00615">
    <property type="entry name" value="recR"/>
    <property type="match status" value="1"/>
</dbReference>
<dbReference type="PANTHER" id="PTHR30446">
    <property type="entry name" value="RECOMBINATION PROTEIN RECR"/>
    <property type="match status" value="1"/>
</dbReference>
<dbReference type="PANTHER" id="PTHR30446:SF0">
    <property type="entry name" value="RECOMBINATION PROTEIN RECR"/>
    <property type="match status" value="1"/>
</dbReference>
<dbReference type="Pfam" id="PF21175">
    <property type="entry name" value="RecR_C"/>
    <property type="match status" value="1"/>
</dbReference>
<dbReference type="Pfam" id="PF21176">
    <property type="entry name" value="RecR_HhH"/>
    <property type="match status" value="1"/>
</dbReference>
<dbReference type="Pfam" id="PF13662">
    <property type="entry name" value="Toprim_4"/>
    <property type="match status" value="1"/>
</dbReference>
<dbReference type="SMART" id="SM00493">
    <property type="entry name" value="TOPRIM"/>
    <property type="match status" value="1"/>
</dbReference>
<dbReference type="SUPFAM" id="SSF111304">
    <property type="entry name" value="Recombination protein RecR"/>
    <property type="match status" value="1"/>
</dbReference>
<dbReference type="PROSITE" id="PS50880">
    <property type="entry name" value="TOPRIM"/>
    <property type="match status" value="1"/>
</dbReference>
<sequence>MRYTSAAIETLIEEFAKLPGIGRKTAQRLAMHILHEPKSGAERLAGALIDIKEKVIRCSVCQNVTDRDADPCYICSSTGRDRSVICVVESPADVLAFEKTGHYKGQYHVLHGLVSPLDGIGPDDIRIHELLARLGERHEAVPVKEVVLALNPTVEGETTSLYITRLLKPFGISVTKIARGIPVGAELEFIDEATLSRAMEGRSAV</sequence>
<reference key="1">
    <citation type="submission" date="2008-05" db="EMBL/GenBank/DDBJ databases">
        <title>Complete sequence of Chlorobium limicola DSM 245.</title>
        <authorList>
            <consortium name="US DOE Joint Genome Institute"/>
            <person name="Lucas S."/>
            <person name="Copeland A."/>
            <person name="Lapidus A."/>
            <person name="Glavina del Rio T."/>
            <person name="Dalin E."/>
            <person name="Tice H."/>
            <person name="Bruce D."/>
            <person name="Goodwin L."/>
            <person name="Pitluck S."/>
            <person name="Schmutz J."/>
            <person name="Larimer F."/>
            <person name="Land M."/>
            <person name="Hauser L."/>
            <person name="Kyrpides N."/>
            <person name="Ovchinnikova G."/>
            <person name="Zhao F."/>
            <person name="Li T."/>
            <person name="Liu Z."/>
            <person name="Overmann J."/>
            <person name="Bryant D.A."/>
            <person name="Richardson P."/>
        </authorList>
    </citation>
    <scope>NUCLEOTIDE SEQUENCE [LARGE SCALE GENOMIC DNA]</scope>
    <source>
        <strain>DSM 245 / NBRC 103803 / 6330</strain>
    </source>
</reference>
<gene>
    <name evidence="1" type="primary">recR</name>
    <name type="ordered locus">Clim_0876</name>
</gene>
<name>RECR_CHLL2</name>
<accession>B3EIC5</accession>
<organism>
    <name type="scientific">Chlorobium limicola (strain DSM 245 / NBRC 103803 / 6330)</name>
    <dbReference type="NCBI Taxonomy" id="290315"/>
    <lineage>
        <taxon>Bacteria</taxon>
        <taxon>Pseudomonadati</taxon>
        <taxon>Chlorobiota</taxon>
        <taxon>Chlorobiia</taxon>
        <taxon>Chlorobiales</taxon>
        <taxon>Chlorobiaceae</taxon>
        <taxon>Chlorobium/Pelodictyon group</taxon>
        <taxon>Chlorobium</taxon>
    </lineage>
</organism>